<sequence>MTISIMGNNVTPIQPNESVNQVKRSPSEAQANFASTLKNAIEDLNHIQLESDKKTEAFASGKIDDLHDVMITAQKSSVTLETTVQVQKKVIDAYNEIMRMQV</sequence>
<gene>
    <name evidence="1" type="primary">fliE</name>
    <name type="ordered locus">OB1554</name>
</gene>
<proteinExistence type="inferred from homology"/>
<protein>
    <recommendedName>
        <fullName evidence="1">Flagellar hook-basal body complex protein FliE</fullName>
    </recommendedName>
</protein>
<comment type="subcellular location">
    <subcellularLocation>
        <location evidence="1">Bacterial flagellum basal body</location>
    </subcellularLocation>
</comment>
<comment type="similarity">
    <text evidence="1">Belongs to the FliE family.</text>
</comment>
<organism>
    <name type="scientific">Oceanobacillus iheyensis (strain DSM 14371 / CIP 107618 / JCM 11309 / KCTC 3954 / HTE831)</name>
    <dbReference type="NCBI Taxonomy" id="221109"/>
    <lineage>
        <taxon>Bacteria</taxon>
        <taxon>Bacillati</taxon>
        <taxon>Bacillota</taxon>
        <taxon>Bacilli</taxon>
        <taxon>Bacillales</taxon>
        <taxon>Bacillaceae</taxon>
        <taxon>Oceanobacillus</taxon>
    </lineage>
</organism>
<keyword id="KW-0975">Bacterial flagellum</keyword>
<keyword id="KW-1185">Reference proteome</keyword>
<name>FLIE_OCEIH</name>
<accession>Q8EQY4</accession>
<feature type="chain" id="PRO_0000105554" description="Flagellar hook-basal body complex protein FliE">
    <location>
        <begin position="1"/>
        <end position="102"/>
    </location>
</feature>
<dbReference type="EMBL" id="BA000028">
    <property type="protein sequence ID" value="BAC13510.1"/>
    <property type="molecule type" value="Genomic_DNA"/>
</dbReference>
<dbReference type="RefSeq" id="WP_011065954.1">
    <property type="nucleotide sequence ID" value="NC_004193.1"/>
</dbReference>
<dbReference type="SMR" id="Q8EQY4"/>
<dbReference type="STRING" id="221109.gene:10733794"/>
<dbReference type="KEGG" id="oih:OB1554"/>
<dbReference type="eggNOG" id="COG1677">
    <property type="taxonomic scope" value="Bacteria"/>
</dbReference>
<dbReference type="HOGENOM" id="CLU_147249_3_4_9"/>
<dbReference type="OrthoDB" id="9812413at2"/>
<dbReference type="PhylomeDB" id="Q8EQY4"/>
<dbReference type="Proteomes" id="UP000000822">
    <property type="component" value="Chromosome"/>
</dbReference>
<dbReference type="GO" id="GO:0009425">
    <property type="term" value="C:bacterial-type flagellum basal body"/>
    <property type="evidence" value="ECO:0007669"/>
    <property type="project" value="UniProtKB-SubCell"/>
</dbReference>
<dbReference type="GO" id="GO:0003774">
    <property type="term" value="F:cytoskeletal motor activity"/>
    <property type="evidence" value="ECO:0007669"/>
    <property type="project" value="InterPro"/>
</dbReference>
<dbReference type="GO" id="GO:0005198">
    <property type="term" value="F:structural molecule activity"/>
    <property type="evidence" value="ECO:0007669"/>
    <property type="project" value="InterPro"/>
</dbReference>
<dbReference type="GO" id="GO:0071973">
    <property type="term" value="P:bacterial-type flagellum-dependent cell motility"/>
    <property type="evidence" value="ECO:0007669"/>
    <property type="project" value="InterPro"/>
</dbReference>
<dbReference type="HAMAP" id="MF_00724">
    <property type="entry name" value="FliE"/>
    <property type="match status" value="1"/>
</dbReference>
<dbReference type="InterPro" id="IPR001624">
    <property type="entry name" value="FliE"/>
</dbReference>
<dbReference type="NCBIfam" id="TIGR00205">
    <property type="entry name" value="fliE"/>
    <property type="match status" value="1"/>
</dbReference>
<dbReference type="PANTHER" id="PTHR34653">
    <property type="match status" value="1"/>
</dbReference>
<dbReference type="PANTHER" id="PTHR34653:SF1">
    <property type="entry name" value="FLAGELLAR HOOK-BASAL BODY COMPLEX PROTEIN FLIE"/>
    <property type="match status" value="1"/>
</dbReference>
<dbReference type="Pfam" id="PF02049">
    <property type="entry name" value="FliE"/>
    <property type="match status" value="1"/>
</dbReference>
<dbReference type="PRINTS" id="PR01006">
    <property type="entry name" value="FLGHOOKFLIE"/>
</dbReference>
<evidence type="ECO:0000255" key="1">
    <source>
        <dbReference type="HAMAP-Rule" id="MF_00724"/>
    </source>
</evidence>
<reference key="1">
    <citation type="journal article" date="2002" name="Nucleic Acids Res.">
        <title>Genome sequence of Oceanobacillus iheyensis isolated from the Iheya Ridge and its unexpected adaptive capabilities to extreme environments.</title>
        <authorList>
            <person name="Takami H."/>
            <person name="Takaki Y."/>
            <person name="Uchiyama I."/>
        </authorList>
    </citation>
    <scope>NUCLEOTIDE SEQUENCE [LARGE SCALE GENOMIC DNA]</scope>
    <source>
        <strain>DSM 14371 / CIP 107618 / JCM 11309 / KCTC 3954 / HTE831</strain>
    </source>
</reference>